<sequence>MNPGYRGRFAPSPTGPLHFGSLVGALASWLDARAHGGVWLVRIEDLDGPRTVPGAADDILATLAHFGMTPDEPPVWQSTRDAAYTAALERLVAAGLVYPCGCTRKEIADSLRAAHERHTTLAYPGTCRTGLHGKPARAWRLRVPDGCDAVITFDDRWQHTQSQNLATEVGDFVLKRADGQWAYQLAVVVDDADAGITHVVRGADLLDSTARQIYLQRCLGVPTPEYLHVPVVVDANGEKLSKQTGATALERNDPLPALQAAAAHLGLANDGDLPGGTLDAFYAAATDAWARRFGPRAG</sequence>
<evidence type="ECO:0000255" key="1">
    <source>
        <dbReference type="HAMAP-Rule" id="MF_01428"/>
    </source>
</evidence>
<proteinExistence type="inferred from homology"/>
<name>GLUQ_BURCH</name>
<keyword id="KW-0030">Aminoacyl-tRNA synthetase</keyword>
<keyword id="KW-0067">ATP-binding</keyword>
<keyword id="KW-0436">Ligase</keyword>
<keyword id="KW-0479">Metal-binding</keyword>
<keyword id="KW-0547">Nucleotide-binding</keyword>
<keyword id="KW-0862">Zinc</keyword>
<organism>
    <name type="scientific">Burkholderia cenocepacia (strain HI2424)</name>
    <dbReference type="NCBI Taxonomy" id="331272"/>
    <lineage>
        <taxon>Bacteria</taxon>
        <taxon>Pseudomonadati</taxon>
        <taxon>Pseudomonadota</taxon>
        <taxon>Betaproteobacteria</taxon>
        <taxon>Burkholderiales</taxon>
        <taxon>Burkholderiaceae</taxon>
        <taxon>Burkholderia</taxon>
        <taxon>Burkholderia cepacia complex</taxon>
    </lineage>
</organism>
<comment type="function">
    <text evidence="1">Catalyzes the tRNA-independent activation of glutamate in presence of ATP and the subsequent transfer of glutamate onto a tRNA(Asp). Glutamate is transferred on the 2-amino-5-(4,5-dihydroxy-2-cyclopenten-1-yl) moiety of the queuosine in the wobble position of the QUC anticodon.</text>
</comment>
<comment type="cofactor">
    <cofactor evidence="1">
        <name>Zn(2+)</name>
        <dbReference type="ChEBI" id="CHEBI:29105"/>
    </cofactor>
    <text evidence="1">Binds 1 zinc ion per subunit.</text>
</comment>
<comment type="similarity">
    <text evidence="1">Belongs to the class-I aminoacyl-tRNA synthetase family. GluQ subfamily.</text>
</comment>
<feature type="chain" id="PRO_1000024351" description="Glutamyl-Q tRNA(Asp) synthetase">
    <location>
        <begin position="1"/>
        <end position="298"/>
    </location>
</feature>
<feature type="short sequence motif" description="'HIGH' region">
    <location>
        <begin position="11"/>
        <end position="21"/>
    </location>
</feature>
<feature type="short sequence motif" description="'KMSKS' region">
    <location>
        <begin position="239"/>
        <end position="243"/>
    </location>
</feature>
<feature type="binding site" evidence="1">
    <location>
        <begin position="8"/>
        <end position="12"/>
    </location>
    <ligand>
        <name>L-glutamate</name>
        <dbReference type="ChEBI" id="CHEBI:29985"/>
    </ligand>
</feature>
<feature type="binding site" evidence="1">
    <location>
        <position position="44"/>
    </location>
    <ligand>
        <name>L-glutamate</name>
        <dbReference type="ChEBI" id="CHEBI:29985"/>
    </ligand>
</feature>
<feature type="binding site" evidence="1">
    <location>
        <position position="100"/>
    </location>
    <ligand>
        <name>Zn(2+)</name>
        <dbReference type="ChEBI" id="CHEBI:29105"/>
    </ligand>
</feature>
<feature type="binding site" evidence="1">
    <location>
        <position position="102"/>
    </location>
    <ligand>
        <name>Zn(2+)</name>
        <dbReference type="ChEBI" id="CHEBI:29105"/>
    </ligand>
</feature>
<feature type="binding site" evidence="1">
    <location>
        <position position="123"/>
    </location>
    <ligand>
        <name>Zn(2+)</name>
        <dbReference type="ChEBI" id="CHEBI:29105"/>
    </ligand>
</feature>
<feature type="binding site" evidence="1">
    <location>
        <position position="127"/>
    </location>
    <ligand>
        <name>Zn(2+)</name>
        <dbReference type="ChEBI" id="CHEBI:29105"/>
    </ligand>
</feature>
<feature type="binding site" evidence="1">
    <location>
        <position position="183"/>
    </location>
    <ligand>
        <name>L-glutamate</name>
        <dbReference type="ChEBI" id="CHEBI:29985"/>
    </ligand>
</feature>
<feature type="binding site" evidence="1">
    <location>
        <position position="201"/>
    </location>
    <ligand>
        <name>L-glutamate</name>
        <dbReference type="ChEBI" id="CHEBI:29985"/>
    </ligand>
</feature>
<feature type="binding site" evidence="1">
    <location>
        <position position="242"/>
    </location>
    <ligand>
        <name>ATP</name>
        <dbReference type="ChEBI" id="CHEBI:30616"/>
    </ligand>
</feature>
<protein>
    <recommendedName>
        <fullName evidence="1">Glutamyl-Q tRNA(Asp) synthetase</fullName>
        <shortName evidence="1">Glu-Q-RSs</shortName>
        <ecNumber evidence="1">6.1.1.-</ecNumber>
    </recommendedName>
</protein>
<dbReference type="EC" id="6.1.1.-" evidence="1"/>
<dbReference type="EMBL" id="CP000458">
    <property type="protein sequence ID" value="ABK09066.1"/>
    <property type="molecule type" value="Genomic_DNA"/>
</dbReference>
<dbReference type="RefSeq" id="WP_011545859.1">
    <property type="nucleotide sequence ID" value="NC_008542.1"/>
</dbReference>
<dbReference type="SMR" id="A0K989"/>
<dbReference type="KEGG" id="bch:Bcen2424_2315"/>
<dbReference type="HOGENOM" id="CLU_015768_0_1_4"/>
<dbReference type="GO" id="GO:0005829">
    <property type="term" value="C:cytosol"/>
    <property type="evidence" value="ECO:0007669"/>
    <property type="project" value="TreeGrafter"/>
</dbReference>
<dbReference type="GO" id="GO:0005524">
    <property type="term" value="F:ATP binding"/>
    <property type="evidence" value="ECO:0007669"/>
    <property type="project" value="UniProtKB-KW"/>
</dbReference>
<dbReference type="GO" id="GO:0004818">
    <property type="term" value="F:glutamate-tRNA ligase activity"/>
    <property type="evidence" value="ECO:0007669"/>
    <property type="project" value="TreeGrafter"/>
</dbReference>
<dbReference type="GO" id="GO:0008270">
    <property type="term" value="F:zinc ion binding"/>
    <property type="evidence" value="ECO:0007669"/>
    <property type="project" value="UniProtKB-UniRule"/>
</dbReference>
<dbReference type="GO" id="GO:0006424">
    <property type="term" value="P:glutamyl-tRNA aminoacylation"/>
    <property type="evidence" value="ECO:0007669"/>
    <property type="project" value="InterPro"/>
</dbReference>
<dbReference type="GO" id="GO:0006400">
    <property type="term" value="P:tRNA modification"/>
    <property type="evidence" value="ECO:0007669"/>
    <property type="project" value="InterPro"/>
</dbReference>
<dbReference type="Gene3D" id="3.40.50.620">
    <property type="entry name" value="HUPs"/>
    <property type="match status" value="1"/>
</dbReference>
<dbReference type="HAMAP" id="MF_01428">
    <property type="entry name" value="Glu_Q_tRNA_synth"/>
    <property type="match status" value="1"/>
</dbReference>
<dbReference type="InterPro" id="IPR022380">
    <property type="entry name" value="Glu-Q_tRNA(Asp)_Synthase"/>
</dbReference>
<dbReference type="InterPro" id="IPR000924">
    <property type="entry name" value="Glu/Gln-tRNA-synth"/>
</dbReference>
<dbReference type="InterPro" id="IPR020058">
    <property type="entry name" value="Glu/Gln-tRNA-synth_Ib_cat-dom"/>
</dbReference>
<dbReference type="InterPro" id="IPR049940">
    <property type="entry name" value="GluQ/Sye"/>
</dbReference>
<dbReference type="InterPro" id="IPR014729">
    <property type="entry name" value="Rossmann-like_a/b/a_fold"/>
</dbReference>
<dbReference type="NCBIfam" id="NF004313">
    <property type="entry name" value="PRK05710.1-2"/>
    <property type="match status" value="1"/>
</dbReference>
<dbReference type="NCBIfam" id="NF004314">
    <property type="entry name" value="PRK05710.1-3"/>
    <property type="match status" value="1"/>
</dbReference>
<dbReference type="NCBIfam" id="NF004315">
    <property type="entry name" value="PRK05710.1-4"/>
    <property type="match status" value="1"/>
</dbReference>
<dbReference type="NCBIfam" id="TIGR03838">
    <property type="entry name" value="queuosine_YadB"/>
    <property type="match status" value="1"/>
</dbReference>
<dbReference type="PANTHER" id="PTHR43311">
    <property type="entry name" value="GLUTAMATE--TRNA LIGASE"/>
    <property type="match status" value="1"/>
</dbReference>
<dbReference type="PANTHER" id="PTHR43311:SF1">
    <property type="entry name" value="GLUTAMYL-Q TRNA(ASP) SYNTHETASE"/>
    <property type="match status" value="1"/>
</dbReference>
<dbReference type="Pfam" id="PF00749">
    <property type="entry name" value="tRNA-synt_1c"/>
    <property type="match status" value="1"/>
</dbReference>
<dbReference type="PRINTS" id="PR00987">
    <property type="entry name" value="TRNASYNTHGLU"/>
</dbReference>
<dbReference type="SUPFAM" id="SSF52374">
    <property type="entry name" value="Nucleotidylyl transferase"/>
    <property type="match status" value="1"/>
</dbReference>
<gene>
    <name evidence="1" type="primary">gluQ</name>
    <name type="ordered locus">Bcen2424_2315</name>
</gene>
<accession>A0K989</accession>
<reference key="1">
    <citation type="submission" date="2006-08" db="EMBL/GenBank/DDBJ databases">
        <title>Complete sequence of chromosome 1 of Burkholderia cenocepacia HI2424.</title>
        <authorList>
            <person name="Copeland A."/>
            <person name="Lucas S."/>
            <person name="Lapidus A."/>
            <person name="Barry K."/>
            <person name="Detter J.C."/>
            <person name="Glavina del Rio T."/>
            <person name="Hammon N."/>
            <person name="Israni S."/>
            <person name="Pitluck S."/>
            <person name="Chain P."/>
            <person name="Malfatti S."/>
            <person name="Shin M."/>
            <person name="Vergez L."/>
            <person name="Schmutz J."/>
            <person name="Larimer F."/>
            <person name="Land M."/>
            <person name="Hauser L."/>
            <person name="Kyrpides N."/>
            <person name="Kim E."/>
            <person name="LiPuma J.J."/>
            <person name="Gonzalez C.F."/>
            <person name="Konstantinidis K."/>
            <person name="Tiedje J.M."/>
            <person name="Richardson P."/>
        </authorList>
    </citation>
    <scope>NUCLEOTIDE SEQUENCE [LARGE SCALE GENOMIC DNA]</scope>
    <source>
        <strain>HI2424</strain>
    </source>
</reference>